<keyword id="KW-0274">FAD</keyword>
<keyword id="KW-0285">Flavoprotein</keyword>
<keyword id="KW-0520">NAD</keyword>
<keyword id="KW-0558">Oxidation</keyword>
<keyword id="KW-0560">Oxidoreductase</keyword>
<keyword id="KW-0676">Redox-active center</keyword>
<keyword id="KW-1185">Reference proteome</keyword>
<dbReference type="EC" id="1.6.3.4" evidence="2"/>
<dbReference type="EMBL" id="L77117">
    <property type="protein sequence ID" value="AAB98641.1"/>
    <property type="status" value="ALT_INIT"/>
    <property type="molecule type" value="Genomic_DNA"/>
</dbReference>
<dbReference type="PIR" id="A64381">
    <property type="entry name" value="A64381"/>
</dbReference>
<dbReference type="RefSeq" id="WP_064496570.1">
    <property type="nucleotide sequence ID" value="NC_000909.1"/>
</dbReference>
<dbReference type="SMR" id="Q58065"/>
<dbReference type="FunCoup" id="Q58065">
    <property type="interactions" value="46"/>
</dbReference>
<dbReference type="STRING" id="243232.MJ_0649"/>
<dbReference type="PaxDb" id="243232-MJ_0649"/>
<dbReference type="EnsemblBacteria" id="AAB98641">
    <property type="protein sequence ID" value="AAB98641"/>
    <property type="gene ID" value="MJ_0649"/>
</dbReference>
<dbReference type="GeneID" id="1451515"/>
<dbReference type="KEGG" id="mja:MJ_0649"/>
<dbReference type="eggNOG" id="arCOG01069">
    <property type="taxonomic scope" value="Archaea"/>
</dbReference>
<dbReference type="HOGENOM" id="CLU_003291_1_3_2"/>
<dbReference type="InParanoid" id="Q58065"/>
<dbReference type="OrthoDB" id="27922at2157"/>
<dbReference type="PhylomeDB" id="Q58065"/>
<dbReference type="BRENDA" id="1.6.3.3">
    <property type="organism ID" value="3260"/>
</dbReference>
<dbReference type="Proteomes" id="UP000000805">
    <property type="component" value="Chromosome"/>
</dbReference>
<dbReference type="GO" id="GO:0008137">
    <property type="term" value="F:NADH dehydrogenase (ubiquinone) activity"/>
    <property type="evidence" value="ECO:0007669"/>
    <property type="project" value="UniProtKB-EC"/>
</dbReference>
<dbReference type="Gene3D" id="3.50.50.60">
    <property type="entry name" value="FAD/NAD(P)-binding domain"/>
    <property type="match status" value="2"/>
</dbReference>
<dbReference type="InterPro" id="IPR050260">
    <property type="entry name" value="FAD-bd_OxRdtase"/>
</dbReference>
<dbReference type="InterPro" id="IPR036188">
    <property type="entry name" value="FAD/NAD-bd_sf"/>
</dbReference>
<dbReference type="InterPro" id="IPR023753">
    <property type="entry name" value="FAD/NAD-binding_dom"/>
</dbReference>
<dbReference type="InterPro" id="IPR016156">
    <property type="entry name" value="FAD/NAD-linked_Rdtase_dimer_sf"/>
</dbReference>
<dbReference type="InterPro" id="IPR004099">
    <property type="entry name" value="Pyr_nucl-diS_OxRdtase_dimer"/>
</dbReference>
<dbReference type="PANTHER" id="PTHR43429:SF3">
    <property type="entry name" value="NITRITE REDUCTASE [NAD(P)H]"/>
    <property type="match status" value="1"/>
</dbReference>
<dbReference type="PANTHER" id="PTHR43429">
    <property type="entry name" value="PYRIDINE NUCLEOTIDE-DISULFIDE OXIDOREDUCTASE DOMAIN-CONTAINING"/>
    <property type="match status" value="1"/>
</dbReference>
<dbReference type="Pfam" id="PF07992">
    <property type="entry name" value="Pyr_redox_2"/>
    <property type="match status" value="1"/>
</dbReference>
<dbReference type="Pfam" id="PF02852">
    <property type="entry name" value="Pyr_redox_dim"/>
    <property type="match status" value="1"/>
</dbReference>
<dbReference type="PRINTS" id="PR00368">
    <property type="entry name" value="FADPNR"/>
</dbReference>
<dbReference type="PRINTS" id="PR00411">
    <property type="entry name" value="PNDRDTASEI"/>
</dbReference>
<dbReference type="SUPFAM" id="SSF51905">
    <property type="entry name" value="FAD/NAD(P)-binding domain"/>
    <property type="match status" value="1"/>
</dbReference>
<dbReference type="SUPFAM" id="SSF55424">
    <property type="entry name" value="FAD/NAD-linked reductases, dimerisation (C-terminal) domain"/>
    <property type="match status" value="1"/>
</dbReference>
<evidence type="ECO:0000250" key="1"/>
<evidence type="ECO:0000250" key="2">
    <source>
        <dbReference type="UniProtKB" id="A2RIB7"/>
    </source>
</evidence>
<evidence type="ECO:0000250" key="3">
    <source>
        <dbReference type="UniProtKB" id="P37062"/>
    </source>
</evidence>
<evidence type="ECO:0000250" key="4">
    <source>
        <dbReference type="UniProtKB" id="Q5XC60"/>
    </source>
</evidence>
<evidence type="ECO:0000305" key="5"/>
<feature type="chain" id="PRO_0000184704" description="NADH oxidase">
    <location>
        <begin position="1"/>
        <end position="448"/>
    </location>
</feature>
<feature type="active site" description="Redox-active">
    <location>
        <position position="42"/>
    </location>
</feature>
<feature type="binding site" evidence="1">
    <location>
        <begin position="7"/>
        <end position="11"/>
    </location>
    <ligand>
        <name>FAD</name>
        <dbReference type="ChEBI" id="CHEBI:57692"/>
    </ligand>
</feature>
<feature type="binding site" evidence="4">
    <location>
        <position position="42"/>
    </location>
    <ligand>
        <name>FAD</name>
        <dbReference type="ChEBI" id="CHEBI:57692"/>
    </ligand>
</feature>
<feature type="binding site" evidence="4">
    <location>
        <position position="80"/>
    </location>
    <ligand>
        <name>FAD</name>
        <dbReference type="ChEBI" id="CHEBI:57692"/>
    </ligand>
</feature>
<feature type="binding site" evidence="1">
    <location>
        <begin position="110"/>
        <end position="113"/>
    </location>
    <ligand>
        <name>FAD</name>
        <dbReference type="ChEBI" id="CHEBI:57692"/>
    </ligand>
</feature>
<feature type="binding site" evidence="4">
    <location>
        <position position="132"/>
    </location>
    <ligand>
        <name>FAD</name>
        <dbReference type="ChEBI" id="CHEBI:57692"/>
    </ligand>
</feature>
<feature type="binding site" evidence="1">
    <location>
        <begin position="152"/>
        <end position="167"/>
    </location>
    <ligand>
        <name>NAD(+)</name>
        <dbReference type="ChEBI" id="CHEBI:57540"/>
    </ligand>
</feature>
<feature type="binding site" evidence="3">
    <location>
        <position position="179"/>
    </location>
    <ligand>
        <name>NAD(+)</name>
        <dbReference type="ChEBI" id="CHEBI:57540"/>
    </ligand>
</feature>
<feature type="binding site" evidence="3">
    <location>
        <position position="243"/>
    </location>
    <ligand>
        <name>NAD(+)</name>
        <dbReference type="ChEBI" id="CHEBI:57540"/>
    </ligand>
</feature>
<feature type="binding site" evidence="1">
    <location>
        <begin position="271"/>
        <end position="281"/>
    </location>
    <ligand>
        <name>FAD</name>
        <dbReference type="ChEBI" id="CHEBI:57692"/>
    </ligand>
</feature>
<feature type="binding site" evidence="4">
    <location>
        <position position="299"/>
    </location>
    <ligand>
        <name>FAD</name>
        <dbReference type="ChEBI" id="CHEBI:57692"/>
    </ligand>
</feature>
<feature type="binding site" evidence="4">
    <location>
        <position position="300"/>
    </location>
    <ligand>
        <name>FAD</name>
        <dbReference type="ChEBI" id="CHEBI:57692"/>
    </ligand>
</feature>
<feature type="binding site" evidence="3">
    <location>
        <position position="328"/>
    </location>
    <ligand>
        <name>NAD(+)</name>
        <dbReference type="ChEBI" id="CHEBI:57540"/>
    </ligand>
</feature>
<feature type="binding site" evidence="4">
    <location>
        <position position="423"/>
    </location>
    <ligand>
        <name>FAD</name>
        <dbReference type="ChEBI" id="CHEBI:57692"/>
    </ligand>
</feature>
<proteinExistence type="inferred from homology"/>
<comment type="function">
    <text evidence="1">Catalyzes the four-electron reduction of molecular oxygen to water.</text>
</comment>
<comment type="catalytic activity">
    <molecule>NADH oxidase</molecule>
    <reaction evidence="2">
        <text>2 NADH + O2 + 2 H(+) = 2 NAD(+) + 2 H2O</text>
        <dbReference type="Rhea" id="RHEA:37799"/>
        <dbReference type="ChEBI" id="CHEBI:15377"/>
        <dbReference type="ChEBI" id="CHEBI:15378"/>
        <dbReference type="ChEBI" id="CHEBI:15379"/>
        <dbReference type="ChEBI" id="CHEBI:57540"/>
        <dbReference type="ChEBI" id="CHEBI:57945"/>
        <dbReference type="EC" id="1.6.3.4"/>
    </reaction>
</comment>
<comment type="cofactor">
    <cofactor evidence="1">
        <name>FAD</name>
        <dbReference type="ChEBI" id="CHEBI:57692"/>
    </cofactor>
    <text evidence="1">Binds 1 FAD per subunit.</text>
</comment>
<comment type="similarity">
    <text evidence="5">Belongs to the class-III pyridine nucleotide-disulfide oxidoreductase family.</text>
</comment>
<comment type="sequence caution" evidence="5">
    <conflict type="erroneous initiation">
        <sequence resource="EMBL-CDS" id="AAB98641"/>
    </conflict>
</comment>
<organism>
    <name type="scientific">Methanocaldococcus jannaschii (strain ATCC 43067 / DSM 2661 / JAL-1 / JCM 10045 / NBRC 100440)</name>
    <name type="common">Methanococcus jannaschii</name>
    <dbReference type="NCBI Taxonomy" id="243232"/>
    <lineage>
        <taxon>Archaea</taxon>
        <taxon>Methanobacteriati</taxon>
        <taxon>Methanobacteriota</taxon>
        <taxon>Methanomada group</taxon>
        <taxon>Methanococci</taxon>
        <taxon>Methanococcales</taxon>
        <taxon>Methanocaldococcaceae</taxon>
        <taxon>Methanocaldococcus</taxon>
    </lineage>
</organism>
<sequence length="448" mass="48876">MRAIIIGSGAAGLTTASTIRKYNKDMEIVVITKEKEIAYSPCAIPYVIEGAIKSFDDIIMHTPEDYKRERNIDILTETTVIDVDSKNNKIKCVDKDGNEFEMNYDYLVLATGAEPFIPPIEGKDLDGVFKVRTIEDGRAILKYIEENGCKKVAVVGAGAIGLEMAYGLKCRGLDVLVVEMAPQVLPRFLDPDMAEIVQKYLEKEGIKVMLSKPLEKIVGKEKVEAVYVDGKLYDVDMVIMATGVRPNIELAKKAGCKIGKFAIEVNEKMQTSIPNIYAVGDCVEVIDFITGEKTLSPFGTAAVRQGKVAGKNIAGVEAKFYPVLNSAVSKIGDLEIGGTGLTAFSANLKRIPIVIGRAKALTRARYYPGGKEIEIKMIFNEDGKVVGCQIVGGERVAERIDAMSIAIFKKVSAEELANMEFCYAPPVSMVHEPLSLAAEDALKKLSNK</sequence>
<protein>
    <recommendedName>
        <fullName>NADH oxidase</fullName>
        <shortName>NOXase</shortName>
        <ecNumber evidence="2">1.6.3.4</ecNumber>
    </recommendedName>
</protein>
<reference key="1">
    <citation type="journal article" date="1996" name="Science">
        <title>Complete genome sequence of the methanogenic archaeon, Methanococcus jannaschii.</title>
        <authorList>
            <person name="Bult C.J."/>
            <person name="White O."/>
            <person name="Olsen G.J."/>
            <person name="Zhou L."/>
            <person name="Fleischmann R.D."/>
            <person name="Sutton G.G."/>
            <person name="Blake J.A."/>
            <person name="FitzGerald L.M."/>
            <person name="Clayton R.A."/>
            <person name="Gocayne J.D."/>
            <person name="Kerlavage A.R."/>
            <person name="Dougherty B.A."/>
            <person name="Tomb J.-F."/>
            <person name="Adams M.D."/>
            <person name="Reich C.I."/>
            <person name="Overbeek R."/>
            <person name="Kirkness E.F."/>
            <person name="Weinstock K.G."/>
            <person name="Merrick J.M."/>
            <person name="Glodek A."/>
            <person name="Scott J.L."/>
            <person name="Geoghagen N.S.M."/>
            <person name="Weidman J.F."/>
            <person name="Fuhrmann J.L."/>
            <person name="Nguyen D."/>
            <person name="Utterback T.R."/>
            <person name="Kelley J.M."/>
            <person name="Peterson J.D."/>
            <person name="Sadow P.W."/>
            <person name="Hanna M.C."/>
            <person name="Cotton M.D."/>
            <person name="Roberts K.M."/>
            <person name="Hurst M.A."/>
            <person name="Kaine B.P."/>
            <person name="Borodovsky M."/>
            <person name="Klenk H.-P."/>
            <person name="Fraser C.M."/>
            <person name="Smith H.O."/>
            <person name="Woese C.R."/>
            <person name="Venter J.C."/>
        </authorList>
    </citation>
    <scope>NUCLEOTIDE SEQUENCE [LARGE SCALE GENOMIC DNA]</scope>
    <source>
        <strain>ATCC 43067 / DSM 2661 / JAL-1 / JCM 10045 / NBRC 100440</strain>
    </source>
</reference>
<accession>Q58065</accession>
<name>NAOX_METJA</name>
<gene>
    <name type="ordered locus">MJ0649</name>
</gene>